<feature type="chain" id="PRO_1000075671" description="4-hydroxy-tetrahydrodipicolinate reductase">
    <location>
        <begin position="1"/>
        <end position="270"/>
    </location>
</feature>
<feature type="active site" description="Proton donor/acceptor" evidence="1">
    <location>
        <position position="155"/>
    </location>
</feature>
<feature type="active site" description="Proton donor" evidence="1">
    <location>
        <position position="159"/>
    </location>
</feature>
<feature type="binding site" evidence="1">
    <location>
        <begin position="7"/>
        <end position="12"/>
    </location>
    <ligand>
        <name>NAD(+)</name>
        <dbReference type="ChEBI" id="CHEBI:57540"/>
    </ligand>
</feature>
<feature type="binding site" evidence="1">
    <location>
        <position position="34"/>
    </location>
    <ligand>
        <name>NADP(+)</name>
        <dbReference type="ChEBI" id="CHEBI:58349"/>
    </ligand>
</feature>
<feature type="binding site" evidence="1">
    <location>
        <begin position="97"/>
        <end position="99"/>
    </location>
    <ligand>
        <name>NAD(+)</name>
        <dbReference type="ChEBI" id="CHEBI:57540"/>
    </ligand>
</feature>
<feature type="binding site" evidence="1">
    <location>
        <begin position="121"/>
        <end position="124"/>
    </location>
    <ligand>
        <name>NAD(+)</name>
        <dbReference type="ChEBI" id="CHEBI:57540"/>
    </ligand>
</feature>
<feature type="binding site" evidence="1">
    <location>
        <position position="156"/>
    </location>
    <ligand>
        <name>(S)-2,3,4,5-tetrahydrodipicolinate</name>
        <dbReference type="ChEBI" id="CHEBI:16845"/>
    </ligand>
</feature>
<feature type="binding site" evidence="1">
    <location>
        <begin position="165"/>
        <end position="166"/>
    </location>
    <ligand>
        <name>(S)-2,3,4,5-tetrahydrodipicolinate</name>
        <dbReference type="ChEBI" id="CHEBI:16845"/>
    </ligand>
</feature>
<reference key="1">
    <citation type="journal article" date="2007" name="Nat. Genet.">
        <title>Genomic analysis of Bartonella identifies type IV secretion systems as host adaptability factors.</title>
        <authorList>
            <person name="Saenz H.L."/>
            <person name="Engel P."/>
            <person name="Stoeckli M.C."/>
            <person name="Lanz C."/>
            <person name="Raddatz G."/>
            <person name="Vayssier-Taussat M."/>
            <person name="Birtles R."/>
            <person name="Schuster S.C."/>
            <person name="Dehio C."/>
        </authorList>
    </citation>
    <scope>NUCLEOTIDE SEQUENCE [LARGE SCALE GENOMIC DNA]</scope>
    <source>
        <strain>CIP 105476 / IBS 506</strain>
    </source>
</reference>
<accession>A9IXE5</accession>
<keyword id="KW-0028">Amino-acid biosynthesis</keyword>
<keyword id="KW-0963">Cytoplasm</keyword>
<keyword id="KW-0220">Diaminopimelate biosynthesis</keyword>
<keyword id="KW-0457">Lysine biosynthesis</keyword>
<keyword id="KW-0520">NAD</keyword>
<keyword id="KW-0521">NADP</keyword>
<keyword id="KW-0560">Oxidoreductase</keyword>
<protein>
    <recommendedName>
        <fullName evidence="1">4-hydroxy-tetrahydrodipicolinate reductase</fullName>
        <shortName evidence="1">HTPA reductase</shortName>
        <ecNumber evidence="1">1.17.1.8</ecNumber>
    </recommendedName>
</protein>
<comment type="function">
    <text evidence="1">Catalyzes the conversion of 4-hydroxy-tetrahydrodipicolinate (HTPA) to tetrahydrodipicolinate.</text>
</comment>
<comment type="catalytic activity">
    <reaction evidence="1">
        <text>(S)-2,3,4,5-tetrahydrodipicolinate + NAD(+) + H2O = (2S,4S)-4-hydroxy-2,3,4,5-tetrahydrodipicolinate + NADH + H(+)</text>
        <dbReference type="Rhea" id="RHEA:35323"/>
        <dbReference type="ChEBI" id="CHEBI:15377"/>
        <dbReference type="ChEBI" id="CHEBI:15378"/>
        <dbReference type="ChEBI" id="CHEBI:16845"/>
        <dbReference type="ChEBI" id="CHEBI:57540"/>
        <dbReference type="ChEBI" id="CHEBI:57945"/>
        <dbReference type="ChEBI" id="CHEBI:67139"/>
        <dbReference type="EC" id="1.17.1.8"/>
    </reaction>
</comment>
<comment type="catalytic activity">
    <reaction evidence="1">
        <text>(S)-2,3,4,5-tetrahydrodipicolinate + NADP(+) + H2O = (2S,4S)-4-hydroxy-2,3,4,5-tetrahydrodipicolinate + NADPH + H(+)</text>
        <dbReference type="Rhea" id="RHEA:35331"/>
        <dbReference type="ChEBI" id="CHEBI:15377"/>
        <dbReference type="ChEBI" id="CHEBI:15378"/>
        <dbReference type="ChEBI" id="CHEBI:16845"/>
        <dbReference type="ChEBI" id="CHEBI:57783"/>
        <dbReference type="ChEBI" id="CHEBI:58349"/>
        <dbReference type="ChEBI" id="CHEBI:67139"/>
        <dbReference type="EC" id="1.17.1.8"/>
    </reaction>
</comment>
<comment type="pathway">
    <text evidence="1">Amino-acid biosynthesis; L-lysine biosynthesis via DAP pathway; (S)-tetrahydrodipicolinate from L-aspartate: step 4/4.</text>
</comment>
<comment type="subcellular location">
    <subcellularLocation>
        <location evidence="1">Cytoplasm</location>
    </subcellularLocation>
</comment>
<comment type="similarity">
    <text evidence="1">Belongs to the DapB family.</text>
</comment>
<comment type="caution">
    <text evidence="2">Was originally thought to be a dihydrodipicolinate reductase (DHDPR), catalyzing the conversion of dihydrodipicolinate to tetrahydrodipicolinate. However, it was shown in E.coli that the substrate of the enzymatic reaction is not dihydrodipicolinate (DHDP) but in fact (2S,4S)-4-hydroxy-2,3,4,5-tetrahydrodipicolinic acid (HTPA), the product released by the DapA-catalyzed reaction.</text>
</comment>
<dbReference type="EC" id="1.17.1.8" evidence="1"/>
<dbReference type="EMBL" id="AM260525">
    <property type="protein sequence ID" value="CAK02160.1"/>
    <property type="molecule type" value="Genomic_DNA"/>
</dbReference>
<dbReference type="RefSeq" id="WP_012232236.1">
    <property type="nucleotide sequence ID" value="NC_010161.1"/>
</dbReference>
<dbReference type="SMR" id="A9IXE5"/>
<dbReference type="KEGG" id="btr:BT_1893"/>
<dbReference type="eggNOG" id="COG0289">
    <property type="taxonomic scope" value="Bacteria"/>
</dbReference>
<dbReference type="HOGENOM" id="CLU_047479_2_1_5"/>
<dbReference type="UniPathway" id="UPA00034">
    <property type="reaction ID" value="UER00018"/>
</dbReference>
<dbReference type="Proteomes" id="UP000001592">
    <property type="component" value="Chromosome"/>
</dbReference>
<dbReference type="GO" id="GO:0005829">
    <property type="term" value="C:cytosol"/>
    <property type="evidence" value="ECO:0007669"/>
    <property type="project" value="TreeGrafter"/>
</dbReference>
<dbReference type="GO" id="GO:0008839">
    <property type="term" value="F:4-hydroxy-tetrahydrodipicolinate reductase"/>
    <property type="evidence" value="ECO:0007669"/>
    <property type="project" value="UniProtKB-EC"/>
</dbReference>
<dbReference type="GO" id="GO:0051287">
    <property type="term" value="F:NAD binding"/>
    <property type="evidence" value="ECO:0007669"/>
    <property type="project" value="UniProtKB-UniRule"/>
</dbReference>
<dbReference type="GO" id="GO:0050661">
    <property type="term" value="F:NADP binding"/>
    <property type="evidence" value="ECO:0007669"/>
    <property type="project" value="UniProtKB-UniRule"/>
</dbReference>
<dbReference type="GO" id="GO:0016726">
    <property type="term" value="F:oxidoreductase activity, acting on CH or CH2 groups, NAD or NADP as acceptor"/>
    <property type="evidence" value="ECO:0007669"/>
    <property type="project" value="UniProtKB-UniRule"/>
</dbReference>
<dbReference type="GO" id="GO:0019877">
    <property type="term" value="P:diaminopimelate biosynthetic process"/>
    <property type="evidence" value="ECO:0007669"/>
    <property type="project" value="UniProtKB-UniRule"/>
</dbReference>
<dbReference type="GO" id="GO:0009089">
    <property type="term" value="P:lysine biosynthetic process via diaminopimelate"/>
    <property type="evidence" value="ECO:0007669"/>
    <property type="project" value="UniProtKB-UniRule"/>
</dbReference>
<dbReference type="CDD" id="cd02274">
    <property type="entry name" value="DHDPR_N"/>
    <property type="match status" value="1"/>
</dbReference>
<dbReference type="FunFam" id="3.30.360.10:FF:000004">
    <property type="entry name" value="4-hydroxy-tetrahydrodipicolinate reductase"/>
    <property type="match status" value="1"/>
</dbReference>
<dbReference type="Gene3D" id="3.30.360.10">
    <property type="entry name" value="Dihydrodipicolinate Reductase, domain 2"/>
    <property type="match status" value="1"/>
</dbReference>
<dbReference type="Gene3D" id="3.40.50.720">
    <property type="entry name" value="NAD(P)-binding Rossmann-like Domain"/>
    <property type="match status" value="1"/>
</dbReference>
<dbReference type="HAMAP" id="MF_00102">
    <property type="entry name" value="DapB"/>
    <property type="match status" value="1"/>
</dbReference>
<dbReference type="InterPro" id="IPR022663">
    <property type="entry name" value="DapB_C"/>
</dbReference>
<dbReference type="InterPro" id="IPR000846">
    <property type="entry name" value="DapB_N"/>
</dbReference>
<dbReference type="InterPro" id="IPR022664">
    <property type="entry name" value="DapB_N_CS"/>
</dbReference>
<dbReference type="InterPro" id="IPR023940">
    <property type="entry name" value="DHDPR_bac"/>
</dbReference>
<dbReference type="InterPro" id="IPR036291">
    <property type="entry name" value="NAD(P)-bd_dom_sf"/>
</dbReference>
<dbReference type="NCBIfam" id="TIGR00036">
    <property type="entry name" value="dapB"/>
    <property type="match status" value="1"/>
</dbReference>
<dbReference type="PANTHER" id="PTHR20836:SF0">
    <property type="entry name" value="4-HYDROXY-TETRAHYDRODIPICOLINATE REDUCTASE 1, CHLOROPLASTIC-RELATED"/>
    <property type="match status" value="1"/>
</dbReference>
<dbReference type="PANTHER" id="PTHR20836">
    <property type="entry name" value="DIHYDRODIPICOLINATE REDUCTASE"/>
    <property type="match status" value="1"/>
</dbReference>
<dbReference type="Pfam" id="PF05173">
    <property type="entry name" value="DapB_C"/>
    <property type="match status" value="1"/>
</dbReference>
<dbReference type="Pfam" id="PF01113">
    <property type="entry name" value="DapB_N"/>
    <property type="match status" value="1"/>
</dbReference>
<dbReference type="PIRSF" id="PIRSF000161">
    <property type="entry name" value="DHPR"/>
    <property type="match status" value="1"/>
</dbReference>
<dbReference type="SUPFAM" id="SSF55347">
    <property type="entry name" value="Glyceraldehyde-3-phosphate dehydrogenase-like, C-terminal domain"/>
    <property type="match status" value="1"/>
</dbReference>
<dbReference type="SUPFAM" id="SSF51735">
    <property type="entry name" value="NAD(P)-binding Rossmann-fold domains"/>
    <property type="match status" value="1"/>
</dbReference>
<dbReference type="PROSITE" id="PS01298">
    <property type="entry name" value="DAPB"/>
    <property type="match status" value="1"/>
</dbReference>
<name>DAPB_BART1</name>
<organism>
    <name type="scientific">Bartonella tribocorum (strain CIP 105476 / IBS 506)</name>
    <dbReference type="NCBI Taxonomy" id="382640"/>
    <lineage>
        <taxon>Bacteria</taxon>
        <taxon>Pseudomonadati</taxon>
        <taxon>Pseudomonadota</taxon>
        <taxon>Alphaproteobacteria</taxon>
        <taxon>Hyphomicrobiales</taxon>
        <taxon>Bartonellaceae</taxon>
        <taxon>Bartonella</taxon>
    </lineage>
</organism>
<evidence type="ECO:0000255" key="1">
    <source>
        <dbReference type="HAMAP-Rule" id="MF_00102"/>
    </source>
</evidence>
<evidence type="ECO:0000305" key="2"/>
<gene>
    <name evidence="1" type="primary">dapB</name>
    <name type="ordered locus">BT_1893</name>
</gene>
<proteinExistence type="inferred from homology"/>
<sequence>MRLTVVGANGRMGRELITAIRQRKDVELCAVLVRKNSPFVGKDASVLIGSDSLGIRITDDPENAFSSTEGIVDFSHPQASLLYADYAAQKKLVHIIGTTGFSKTEEEKIAEFAKYTTIVKSGNMSLGINLLANLVKKAAKALEADDFDIEIYEMHHANKVDAPSGTALLLGQAAAEGRNVMLQDVRINERNGYTGKREKGSIGFSCSRGGTVIGEHSVIFAGSHERIVLSHTAQERSIFANGALKAASWAKNHANGLYSMLDVLGLNDQF</sequence>